<keyword id="KW-0002">3D-structure</keyword>
<keyword id="KW-0031">Aminopeptidase</keyword>
<keyword id="KW-0963">Cytoplasm</keyword>
<keyword id="KW-0224">Dipeptidase</keyword>
<keyword id="KW-0378">Hydrolase</keyword>
<keyword id="KW-0479">Metal-binding</keyword>
<keyword id="KW-0645">Protease</keyword>
<keyword id="KW-1185">Reference proteome</keyword>
<keyword id="KW-0862">Zinc</keyword>
<feature type="chain" id="PRO_0000457794" description="Leucine aminopeptidase">
    <location>
        <begin position="1"/>
        <end position="605"/>
    </location>
</feature>
<feature type="region of interest" description="L13 loop" evidence="13">
    <location>
        <begin position="384"/>
        <end position="401"/>
    </location>
</feature>
<feature type="active site" evidence="1">
    <location>
        <position position="386"/>
    </location>
</feature>
<feature type="active site" evidence="1">
    <location>
        <position position="463"/>
    </location>
</feature>
<feature type="binding site" evidence="20 21 29 31">
    <location>
        <position position="374"/>
    </location>
    <ligand>
        <name>a peptide</name>
        <dbReference type="ChEBI" id="CHEBI:60466"/>
        <note>substrate</note>
    </ligand>
</feature>
<feature type="binding site" evidence="4 5 7 8 9 13 14 24 26 27 28 29 31 32 33 34 35 36 38">
    <location>
        <position position="374"/>
    </location>
    <ligand>
        <name>Zn(2+)</name>
        <dbReference type="ChEBI" id="CHEBI:29105"/>
        <label>2</label>
        <note>catalytic</note>
    </ligand>
</feature>
<feature type="binding site" evidence="20 21 29 31">
    <location>
        <position position="379"/>
    </location>
    <ligand>
        <name>a peptide</name>
        <dbReference type="ChEBI" id="CHEBI:60466"/>
        <note>substrate</note>
    </ligand>
</feature>
<feature type="binding site" evidence="4 5 7 8 9 13 14 23 24 28 29 31 32 33 34 35 36 38">
    <location>
        <position position="379"/>
    </location>
    <ligand>
        <name>Zn(2+)</name>
        <dbReference type="ChEBI" id="CHEBI:29105"/>
        <label>1</label>
        <note>structural</note>
    </ligand>
</feature>
<feature type="binding site" evidence="4 5 7 8 9 13 14 24 26 27 28 29 31 32 33 34 35 36 38">
    <location>
        <position position="379"/>
    </location>
    <ligand>
        <name>Zn(2+)</name>
        <dbReference type="ChEBI" id="CHEBI:29105"/>
        <label>2</label>
        <note>catalytic</note>
    </ligand>
</feature>
<feature type="binding site" evidence="20 21 29 31">
    <location>
        <position position="386"/>
    </location>
    <ligand>
        <name>a peptide</name>
        <dbReference type="ChEBI" id="CHEBI:60466"/>
        <note>substrate</note>
    </ligand>
</feature>
<feature type="binding site" evidence="13 37">
    <location>
        <position position="394"/>
    </location>
    <ligand>
        <name>Zn(2+)</name>
        <dbReference type="ChEBI" id="CHEBI:29105"/>
        <label>3</label>
        <note>structural</note>
    </ligand>
</feature>
<feature type="binding site" evidence="13 37">
    <location>
        <position position="396"/>
    </location>
    <ligand>
        <name>Zn(2+)</name>
        <dbReference type="ChEBI" id="CHEBI:29105"/>
        <label>3</label>
        <note>structural</note>
    </ligand>
</feature>
<feature type="binding site" evidence="20 21 29 31">
    <location>
        <position position="399"/>
    </location>
    <ligand>
        <name>a peptide</name>
        <dbReference type="ChEBI" id="CHEBI:60466"/>
        <note>substrate</note>
    </ligand>
</feature>
<feature type="binding site" evidence="4 5 7 8 9 13 14 24 26 27 28 29 31 32 33 34 35 36 38">
    <location>
        <position position="399"/>
    </location>
    <ligand>
        <name>Zn(2+)</name>
        <dbReference type="ChEBI" id="CHEBI:29105"/>
        <label>2</label>
        <note>catalytic</note>
    </ligand>
</feature>
<feature type="binding site" evidence="13 37">
    <location>
        <position position="399"/>
    </location>
    <ligand>
        <name>Zn(2+)</name>
        <dbReference type="ChEBI" id="CHEBI:29105"/>
        <label>3</label>
        <note>structural</note>
    </ligand>
</feature>
<feature type="binding site" evidence="20 21 29 31">
    <location>
        <position position="459"/>
    </location>
    <ligand>
        <name>a peptide</name>
        <dbReference type="ChEBI" id="CHEBI:60466"/>
        <note>substrate</note>
    </ligand>
</feature>
<feature type="binding site" evidence="4 5 7 8 9 13 14 23 24 28 29 31 32 33 34 35 36 38">
    <location>
        <position position="459"/>
    </location>
    <ligand>
        <name>Zn(2+)</name>
        <dbReference type="ChEBI" id="CHEBI:29105"/>
        <label>1</label>
        <note>structural</note>
    </ligand>
</feature>
<feature type="binding site" evidence="4 5 7 8 9 13 14 23 24 28 29 31 32 33 34 35 36 38">
    <location>
        <position position="461"/>
    </location>
    <ligand>
        <name>Zn(2+)</name>
        <dbReference type="ChEBI" id="CHEBI:29105"/>
        <label>1</label>
        <note>structural</note>
    </ligand>
</feature>
<feature type="binding site" evidence="4 5 7 8 9 13 14 24 26 27 28 29 31 32 33 34 35 36 38">
    <location>
        <position position="461"/>
    </location>
    <ligand>
        <name>Zn(2+)</name>
        <dbReference type="ChEBI" id="CHEBI:29105"/>
        <label>2</label>
        <note>catalytic</note>
    </ligand>
</feature>
<feature type="site" description="Essential for hexamer stabilization" evidence="13">
    <location>
        <position position="386"/>
    </location>
</feature>
<feature type="mutagenesis site" description="6.5-fold reduction in catalytic efficiency in the presence of Co(2+); 854-fold reduction in catalytic efficiency in the presence of Mn(2+); substrate affinity is slightly reduced; impairs formation of stable homohexamer; when associated with L-461." evidence="10">
    <original>D</original>
    <variation>A</variation>
    <location>
        <position position="379"/>
    </location>
</feature>
<feature type="mutagenesis site" description="100-fold decrease in catalytic efficiency. 2-fold decrease in substrate affinity. Loss of hexamer formation with formation of dimers and trimers." evidence="13">
    <original>K</original>
    <variation>A</variation>
    <location>
        <position position="386"/>
    </location>
</feature>
<feature type="mutagenesis site" description="16-fold decrease in catalytic efficiency. No effect on hexamer formation." evidence="13">
    <original>A</original>
    <variation>P</variation>
    <location>
        <position position="387"/>
    </location>
</feature>
<feature type="mutagenesis site" description="8-fold decrease in catalytic efficiency. 3-fold decrease in substrate affinity. No effect on hexamer formation." evidence="13">
    <location>
        <begin position="388"/>
        <end position="390"/>
    </location>
</feature>
<feature type="mutagenesis site" description="13-fold decrease in catalytic efficiency. 1.5-fold decrease in substrate affinity. No effect on hexamer formation." evidence="13">
    <location>
        <begin position="388"/>
        <end position="389"/>
    </location>
</feature>
<feature type="mutagenesis site" description="7.5-fold increase in catalytic efficiency. No effect on hexamer formation. 1.7-fold increase in substrate affinity." evidence="13">
    <original>D</original>
    <variation>A</variation>
    <location>
        <position position="394"/>
    </location>
</feature>
<feature type="mutagenesis site" description="6.5-fold reduction in catalytic efficiency in the presence of Co(2+); 854-fold reduction in catalytic efficiency in the presence of Mn(2+); substrate affinity is slightly reduced; impairs formation of stable homohexamer; when associated with A-379." evidence="10">
    <original>E</original>
    <variation>L</variation>
    <location>
        <position position="461"/>
    </location>
</feature>
<feature type="mutagenesis site" description="Loss of catalytic activity and impairs oligomerization; when associated with A-533." evidence="10 13">
    <original>W</original>
    <variation>A</variation>
    <location>
        <position position="525"/>
    </location>
</feature>
<feature type="mutagenesis site" description="Loss of catalytic activity and impairs oligomerization; when associated with A-525." evidence="10 13">
    <original>Y</original>
    <variation>A</variation>
    <location>
        <position position="533"/>
    </location>
</feature>
<feature type="helix" evidence="43">
    <location>
        <begin position="106"/>
        <end position="109"/>
    </location>
</feature>
<feature type="strand" evidence="43">
    <location>
        <begin position="111"/>
        <end position="116"/>
    </location>
</feature>
<feature type="helix" evidence="43">
    <location>
        <begin position="117"/>
        <end position="119"/>
    </location>
</feature>
<feature type="strand" evidence="43">
    <location>
        <begin position="125"/>
        <end position="132"/>
    </location>
</feature>
<feature type="strand" evidence="39">
    <location>
        <begin position="135"/>
        <end position="137"/>
    </location>
</feature>
<feature type="helix" evidence="43">
    <location>
        <begin position="151"/>
        <end position="156"/>
    </location>
</feature>
<feature type="helix" evidence="43">
    <location>
        <begin position="159"/>
        <end position="162"/>
    </location>
</feature>
<feature type="strand" evidence="43">
    <location>
        <begin position="172"/>
        <end position="178"/>
    </location>
</feature>
<feature type="strand" evidence="43">
    <location>
        <begin position="184"/>
        <end position="191"/>
    </location>
</feature>
<feature type="helix" evidence="43">
    <location>
        <begin position="200"/>
        <end position="214"/>
    </location>
</feature>
<feature type="strand" evidence="40">
    <location>
        <begin position="215"/>
        <end position="217"/>
    </location>
</feature>
<feature type="strand" evidence="43">
    <location>
        <begin position="220"/>
        <end position="226"/>
    </location>
</feature>
<feature type="helix" evidence="43">
    <location>
        <begin position="232"/>
        <end position="246"/>
    </location>
</feature>
<feature type="strand" evidence="41">
    <location>
        <begin position="254"/>
        <end position="256"/>
    </location>
</feature>
<feature type="strand" evidence="43">
    <location>
        <begin position="265"/>
        <end position="271"/>
    </location>
</feature>
<feature type="helix" evidence="43">
    <location>
        <begin position="274"/>
        <end position="277"/>
    </location>
</feature>
<feature type="helix" evidence="43">
    <location>
        <begin position="280"/>
        <end position="299"/>
    </location>
</feature>
<feature type="turn" evidence="43">
    <location>
        <begin position="302"/>
        <end position="304"/>
    </location>
</feature>
<feature type="helix" evidence="43">
    <location>
        <begin position="307"/>
        <end position="321"/>
    </location>
</feature>
<feature type="strand" evidence="43">
    <location>
        <begin position="324"/>
        <end position="328"/>
    </location>
</feature>
<feature type="helix" evidence="43">
    <location>
        <begin position="330"/>
        <end position="335"/>
    </location>
</feature>
<feature type="helix" evidence="43">
    <location>
        <begin position="339"/>
        <end position="345"/>
    </location>
</feature>
<feature type="strand" evidence="43">
    <location>
        <begin position="353"/>
        <end position="360"/>
    </location>
</feature>
<feature type="strand" evidence="43">
    <location>
        <begin position="367"/>
        <end position="373"/>
    </location>
</feature>
<feature type="strand" evidence="43">
    <location>
        <begin position="375"/>
        <end position="379"/>
    </location>
</feature>
<feature type="helix" evidence="43">
    <location>
        <begin position="393"/>
        <end position="400"/>
    </location>
</feature>
<feature type="helix" evidence="43">
    <location>
        <begin position="401"/>
        <end position="416"/>
    </location>
</feature>
<feature type="strand" evidence="43">
    <location>
        <begin position="419"/>
        <end position="432"/>
    </location>
</feature>
<feature type="strand" evidence="42">
    <location>
        <begin position="435"/>
        <end position="437"/>
    </location>
</feature>
<feature type="strand" evidence="43">
    <location>
        <begin position="444"/>
        <end position="446"/>
    </location>
</feature>
<feature type="strand" evidence="43">
    <location>
        <begin position="452"/>
        <end position="454"/>
    </location>
</feature>
<feature type="helix" evidence="43">
    <location>
        <begin position="461"/>
        <end position="475"/>
    </location>
</feature>
<feature type="strand" evidence="43">
    <location>
        <begin position="479"/>
        <end position="485"/>
    </location>
</feature>
<feature type="helix" evidence="43">
    <location>
        <begin position="491"/>
        <end position="494"/>
    </location>
</feature>
<feature type="turn" evidence="43">
    <location>
        <begin position="495"/>
        <end position="498"/>
    </location>
</feature>
<feature type="strand" evidence="43">
    <location>
        <begin position="500"/>
        <end position="505"/>
    </location>
</feature>
<feature type="helix" evidence="43">
    <location>
        <begin position="507"/>
        <end position="520"/>
    </location>
</feature>
<feature type="strand" evidence="43">
    <location>
        <begin position="524"/>
        <end position="526"/>
    </location>
</feature>
<feature type="helix" evidence="43">
    <location>
        <begin position="531"/>
        <end position="537"/>
    </location>
</feature>
<feature type="strand" evidence="43">
    <location>
        <begin position="540"/>
        <end position="547"/>
    </location>
</feature>
<feature type="helix" evidence="43">
    <location>
        <begin position="554"/>
        <end position="563"/>
    </location>
</feature>
<feature type="strand" evidence="43">
    <location>
        <begin position="567"/>
        <end position="575"/>
    </location>
</feature>
<feature type="turn" evidence="43">
    <location>
        <begin position="577"/>
        <end position="579"/>
    </location>
</feature>
<feature type="strand" evidence="43">
    <location>
        <begin position="580"/>
        <end position="582"/>
    </location>
</feature>
<feature type="turn" evidence="43">
    <location>
        <begin position="583"/>
        <end position="586"/>
    </location>
</feature>
<feature type="helix" evidence="43">
    <location>
        <begin position="593"/>
        <end position="602"/>
    </location>
</feature>
<comment type="function">
    <text evidence="2 5 6 10 11 12">Aminopeptidase which preferentially cleaves leucine residues from the N-terminus of peptides (PubMed:17107951, PubMed:21844374, PubMed:22359643, PubMed:33536500, PubMed:34133730). Also, has some activity towards tryptophan and methionine and to a lesser extent towards phenylalanine (PubMed:17107951, PubMed:22359643, PubMed:34133730). Has very low activity or no activity towards the other amino acids (PubMed:17107951, PubMed:22359643, PubMed:34133730). In addition, cleaves the Cys-Gly dipeptide, probably as part of the glutathione regulation pathway; cleavage only occurs in the presence of Mn(2+) (PubMed:33303633). During the asexual blood stage, plays a role in the final step of host hemoglobin catabolism, by cleaving hemoglobin-derived oligopeptides providing a source of amino acids for the parasite protein synthesis and for the maintenance of osmotic homeostasis (PubMed:34133730). During the asexual blood stage, may also play a role during the ring-trophozoite transition (PubMed:21844374).</text>
</comment>
<comment type="catalytic activity">
    <reaction evidence="2 3 5 6 7 8 9 10 11 12 13">
        <text>Release of an N-terminal amino acid, Xaa-|-Yaa-, in which Xaa is preferably Leu, but may be other amino acids including Pro although not Arg or Lys, and Yaa may be Pro. Amino acid amides and methyl esters are also readily hydrolyzed, but rates on arylamides are exceedingly low.</text>
        <dbReference type="EC" id="3.4.11.1"/>
    </reaction>
</comment>
<comment type="catalytic activity">
    <reaction evidence="10">
        <text>L-cysteinylglycine + H2O = L-cysteine + glycine</text>
        <dbReference type="Rhea" id="RHEA:28783"/>
        <dbReference type="ChEBI" id="CHEBI:15377"/>
        <dbReference type="ChEBI" id="CHEBI:35235"/>
        <dbReference type="ChEBI" id="CHEBI:57305"/>
        <dbReference type="ChEBI" id="CHEBI:61694"/>
    </reaction>
</comment>
<comment type="cofactor">
    <cofactor evidence="2 3">
        <name>Zn(2+)</name>
        <dbReference type="ChEBI" id="CHEBI:29105"/>
    </cofactor>
    <text evidence="3 4 5 7 8 9 10 13">Binds 2 Zn(2+) ions per subunit (PubMed:19408962, PubMed:20133789, PubMed:21844374, PubMed:23713488, PubMed:25299353, PubMed:25645579, PubMed:35691342). Two metal binding sites with different affinities are located in the enzyme active site and can be occupied in vitro by different metals (PubMed:19408962). Site 1 binds metal with low affinity and can be occupied by Zn(2+), Mn(2+), Co(2+) or Mg(2+) (PubMed:19408962). While Zn(2+) has the highest affinity for site 1, catalytic activity is the highest with Mn(2+) or Co(2+) and less with Mg(2+) (PubMed:19408962, PubMed:33303633). Site 2 binds tightly to the metal ion and can be occupied only by Zn(2+) or Co(2+) (PubMed:19408962). A third metal binding site is also present in an inactive conformation of the hexamer; in this conformation only the metal binding sites 1 and 3 are occupied (PubMed:35691342).</text>
</comment>
<comment type="activity regulation">
    <text evidence="2 3 5 10 12 13">Oligomerization is required for catalytic activity and is metal-dependent (PubMed:33303633, PubMed:35691342). The type of metal that binds the 2 metal binding sites influences catalytic activity and substrate specificity (PubMed:17107951, PubMed:19408962, PubMed:33303633). In vitro, activated by Co(2+), Mn(2+), Ni(2+), Mg(2+) and Zn(2+) with decreasing strength (PubMed:17107951, PubMed:19408962, PubMed:33303633). Occupancy of the site 2 is essential and sufficient for activating the enzyme but occupation of the 2 sites is necessary for full catalytic activity (PubMed:19408962). Inhibited by fungal metabolite bestatin (PubMed:17107951, PubMed:19408962, PubMed:34133730). Inhibited by Phe-Naphthyl (PNAP) (PubMed:21844374).</text>
</comment>
<comment type="biophysicochemical properties">
    <kinetics>
        <KM evidence="3">770 uM for H-Leu-NHMec (in the presence of Zn(2+), but only metal binding site 2 occupied)</KM>
        <KM evidence="3">510 uM for H-Leu-NHMec (in the presence of Zn(2+), both metal binding sites occupied)</KM>
        <KM evidence="3">23 uM for H-Leu-NHMec (in the presence of Co(2+), with Zn(2+) bound to metal binding site 2 and Co(2+) bound to site 1)</KM>
        <KM evidence="3">310 uM for H-Leu-NHMec (in the presence of Mn(2+), with Zn(2+) bound to metal binding site 2 and Mn(2+) bound to site 1)</KM>
        <KM evidence="3">350 uM for H-Leu-NHMec (in the presence of Mg(2+), with Zn(2+) bound to metal binding site 2 and Mg(2+) bound to site 1)</KM>
        <KM evidence="12">40.9 uM for H-Leu-NHMec (at pH 8, at 37 degrees Celsius and in the presence of Co(2+))</KM>
        <KM evidence="10">15 uM for H-Leu-NHMec (at pH 8, at 37 degrees Celsius and in the presence of Co(2+))</KM>
        <KM evidence="10">26.5 uM for H-Leu-NHMec (at pH 8, at 37 degrees Celsius and in the presence of Mn(2+))</KM>
        <KM evidence="13">33.7 uM for H-Leu-NHMec (at pH 8, at 37 degrees Celsius and in the presence of Mn(2+))</KM>
        <KM evidence="6">30.32 uM for Leu-ACC (at pH 8, at 37 degrees Celsius and in the presence of Co(2+))</KM>
        <KM evidence="6">9.267 uM for Phe-ACC (at pH 8, at 37 degrees Celsius and in the presence of Co(2+))</KM>
        <KM evidence="6">3.44 uM for Met-ACC (at pH 8, at 37 degrees Celsius and in the presence of Co(2+))</KM>
        <KM evidence="6">22.99 uM for Trp-ACC (at pH 8, at 37 degrees Celsius and in the presence of Co(2+))</KM>
        <text evidence="3 6 10 12 13">kcat is 2200 sec(-1) with for H-Leu-NHMec as substrate (in the presence of Zn(2+), but only metal binding site 2 occupied) (PubMed:19408962). kcat is 3800 sec(-1) with for H-Leu-NHMec as substrate (in the presence of Zn(2+), both metal binding sites occupied) (PubMed:19408962). kcat is 1900 sec(-1) with for H-Leu-NHMec as substrate (in the presence of Co(2+), with Zn(2+) bound to metal binding site 2 and Co(2+) bound to site 1) (PubMed:19408962). kcat is 8000 sec(-1) with for H-Leu-NHMec as substrate (in the presence of Mn(2+), with Zn(2+) bound to metal binding site 2 and Mn(2+) bound to site 1) (PubMed:19408962). kcat is 9400 sec(-1) with for H-Leu-NHMec as substrate (in the presence of Mg(2+), with Zn(2+) bound to metal binding site 2 and Mg(2+) bound to site 1) (PubMed:19408962). kcat is 0.01 sec(-1) with for H-Leu-NHMec as substrate (at pH 8, at 37 degrees Celsius and in the presence of Co(2+)) (PubMed:34133730). kcat is 0.069 sec(-1) with for H-Leu-NHMec as substrate (at pH 8, at 37 degrees Celsius and in the presence of Co(2+)) (PubMed:33303633). kcat is 1.2 sec(-1) with for H-Leu-NHMec as substrate (at pH 8, at 37 degrees Celsius and in the presence of Mn(2+)) (PubMed:33303633). kcat is 0.00015 sec(-1) with for H-Leu-NHMec as substrate (at pH 8, at 37 degrees Celsius and in the presence of Mn(2+)) (PubMed:35691342). kcat is 2622 sec(-1) with for Leu-ACC as substrate (at pH 8, at 37 degrees Celsius and in the presence of Co(2+)) (PubMed:22359643). kcat is 1668 sec(-1) with for Phe-ACC as substrate (at pH 8, at 37 degrees Celsius and in the presence of Co(2+)) (PubMed:22359643). kcat is 117 sec(-1) with for Met-ACC as substrate (at pH 8, at 37 degrees Celsius and in the presence of Co(2+)) (PubMed:22359643). kcat is 3194 sec(-1) with for Trp-ACC as substrate (at pH 8, at 37 degrees Celsius and in the presence of Co(2+)) (PubMed:22359643).</text>
    </kinetics>
    <phDependence>
        <text evidence="2 10 11">Optimum pH is 8.5 (PubMed:17107951, PubMed:33536500). Active between pH 7 and 11 (PubMed:17107951, PubMed:33536500). Optimum pH is 8 for the cleavage of the Cys-Gly dipeptide (PubMed:33303633).</text>
    </phDependence>
</comment>
<comment type="subunit">
    <text evidence="2 10 13">Homohexamer composed of dimer of trimers (PubMed:17107951, PubMed:33303633, PubMed:35691342). Both the identity and concentration of metal ions available dictate the extent to which oligomerization occurs; Mn(2+) and Co(2+) induces oligomerization, whereas Mg(2+) has no effect, and Zn(2+) causes irreversible protein aggregation in vitro (PubMed:33303633).</text>
</comment>
<comment type="interaction">
    <interactant intactId="EBI-15833302">
        <id>Q8IL11</id>
    </interactant>
    <interactant intactId="EBI-15833302">
        <id>Q8IL11</id>
        <label>LAP</label>
    </interactant>
    <organismsDiffer>false</organismsDiffer>
    <experiments>2</experiments>
</comment>
<comment type="subcellular location">
    <subcellularLocation>
        <location evidence="2 11">Cytoplasm</location>
    </subcellularLocation>
</comment>
<comment type="developmental stage">
    <text evidence="2 11">Expressed during the asexual blood stage, including in rings, trophozoites and schizonts (at protein level).</text>
</comment>
<comment type="domain">
    <text evidence="13">The L13 loop movement regulates the transition between active and inactive conformations by repositioning Lys-386, which, in turn, mediates the rearrangement of the binuclear metal center.</text>
</comment>
<comment type="similarity">
    <text evidence="19">Belongs to the peptidase M17 family.</text>
</comment>
<proteinExistence type="evidence at protein level"/>
<evidence type="ECO:0000250" key="1">
    <source>
        <dbReference type="UniProtKB" id="P00727"/>
    </source>
</evidence>
<evidence type="ECO:0000269" key="2">
    <source>
    </source>
</evidence>
<evidence type="ECO:0000269" key="3">
    <source>
    </source>
</evidence>
<evidence type="ECO:0000269" key="4">
    <source>
    </source>
</evidence>
<evidence type="ECO:0000269" key="5">
    <source>
    </source>
</evidence>
<evidence type="ECO:0000269" key="6">
    <source>
    </source>
</evidence>
<evidence type="ECO:0000269" key="7">
    <source>
    </source>
</evidence>
<evidence type="ECO:0000269" key="8">
    <source>
    </source>
</evidence>
<evidence type="ECO:0000269" key="9">
    <source>
    </source>
</evidence>
<evidence type="ECO:0000269" key="10">
    <source>
    </source>
</evidence>
<evidence type="ECO:0000269" key="11">
    <source>
    </source>
</evidence>
<evidence type="ECO:0000269" key="12">
    <source>
    </source>
</evidence>
<evidence type="ECO:0000269" key="13">
    <source>
    </source>
</evidence>
<evidence type="ECO:0000269" key="14">
    <source ref="13"/>
</evidence>
<evidence type="ECO:0000303" key="15">
    <source>
    </source>
</evidence>
<evidence type="ECO:0000303" key="16">
    <source>
    </source>
</evidence>
<evidence type="ECO:0000303" key="17">
    <source>
    </source>
</evidence>
<evidence type="ECO:0000303" key="18">
    <source>
    </source>
</evidence>
<evidence type="ECO:0000305" key="19"/>
<evidence type="ECO:0000305" key="20">
    <source>
    </source>
</evidence>
<evidence type="ECO:0000305" key="21">
    <source>
    </source>
</evidence>
<evidence type="ECO:0000312" key="22">
    <source>
        <dbReference type="EMBL" id="CZU00157.1"/>
    </source>
</evidence>
<evidence type="ECO:0000312" key="23">
    <source>
        <dbReference type="PDB" id="3KQZ"/>
    </source>
</evidence>
<evidence type="ECO:0000312" key="24">
    <source>
        <dbReference type="PDB" id="3T8W"/>
    </source>
</evidence>
<evidence type="ECO:0000312" key="25">
    <source>
        <dbReference type="Proteomes" id="UP000001450"/>
    </source>
</evidence>
<evidence type="ECO:0007744" key="26">
    <source>
        <dbReference type="PDB" id="3KQX"/>
    </source>
</evidence>
<evidence type="ECO:0007744" key="27">
    <source>
        <dbReference type="PDB" id="3KQZ"/>
    </source>
</evidence>
<evidence type="ECO:0007744" key="28">
    <source>
        <dbReference type="PDB" id="3KR4"/>
    </source>
</evidence>
<evidence type="ECO:0007744" key="29">
    <source>
        <dbReference type="PDB" id="3KR5"/>
    </source>
</evidence>
<evidence type="ECO:0007744" key="30">
    <source>
        <dbReference type="PDB" id="3T8W"/>
    </source>
</evidence>
<evidence type="ECO:0007744" key="31">
    <source>
        <dbReference type="PDB" id="4K3N"/>
    </source>
</evidence>
<evidence type="ECO:0007744" key="32">
    <source>
        <dbReference type="PDB" id="4R6T"/>
    </source>
</evidence>
<evidence type="ECO:0007744" key="33">
    <source>
        <dbReference type="PDB" id="4R76"/>
    </source>
</evidence>
<evidence type="ECO:0007744" key="34">
    <source>
        <dbReference type="PDB" id="4R7M"/>
    </source>
</evidence>
<evidence type="ECO:0007744" key="35">
    <source>
        <dbReference type="PDB" id="4X2T"/>
    </source>
</evidence>
<evidence type="ECO:0007744" key="36">
    <source>
        <dbReference type="PDB" id="7RIE"/>
    </source>
</evidence>
<evidence type="ECO:0007744" key="37">
    <source>
        <dbReference type="PDB" id="7SRV"/>
    </source>
</evidence>
<evidence type="ECO:0007744" key="38">
    <source>
        <dbReference type="PDB" id="7T3V"/>
    </source>
</evidence>
<evidence type="ECO:0007829" key="39">
    <source>
        <dbReference type="PDB" id="3KR4"/>
    </source>
</evidence>
<evidence type="ECO:0007829" key="40">
    <source>
        <dbReference type="PDB" id="3KR5"/>
    </source>
</evidence>
<evidence type="ECO:0007829" key="41">
    <source>
        <dbReference type="PDB" id="4R7M"/>
    </source>
</evidence>
<evidence type="ECO:0007829" key="42">
    <source>
        <dbReference type="PDB" id="4X2T"/>
    </source>
</evidence>
<evidence type="ECO:0007829" key="43">
    <source>
        <dbReference type="PDB" id="8EZ4"/>
    </source>
</evidence>
<sequence length="605" mass="67821">MYFSSLCKFLPISEKEKIYLNIVKKRFCKSNIYYNNNNNNIINYNKRGLKFYPFCNNLKKNINFVNINNKKGINFHSINKERKMASEVPQVVSLDPTSIPIEYNTPIHDIKVQVYDIKGGCNVEEGLTIFLVNNPGKENGPVKISSKVNDKNVSEFLKDENMEKFNVKLGTSKHFYMFNDNKNSVAVGYVGCGSVADLSEADMKRVVLSLVTMLHDNKLSKLTVVFEINVDKNLFRFFLETLFYEYMTDERFKSTDKNVNMEYIKHLGVYINNADTYKEEVEKARVYYFGTYYASQLIAAPSNYCNPVSLSNAAVELAQKLNLEYKILGVKELEELKMGAYLSVGKGSMYPNKFIHLTYKSKGDVKKKIALVGKGITFDSGGYNLKAAPGSMIDLMKFDMSGCAAVLGCAYCVGTLKPENVEIHFLSAVCENMVSKNSYRPGDIITASNGKTIEVGNTDAEGRLTLADALVYAEKLGVDYIVDIATLTGAMLYSLGTSYAGVFGNNEELINKILNSSKTSNEPVWWLPIINEYRATLNSKYADINNISSSVKASSIVASLFLKEFVQNTAWAHIDIAGVSWNFKARKPKGFGVRLLTEFVLNDAL</sequence>
<dbReference type="EC" id="3.4.11.1" evidence="2 3 5 6 10 11 12"/>
<dbReference type="EC" id="3.4.13.-" evidence="10"/>
<dbReference type="EMBL" id="LN999946">
    <property type="protein sequence ID" value="CZU00157.1"/>
    <property type="molecule type" value="Genomic_DNA"/>
</dbReference>
<dbReference type="RefSeq" id="XP_001348613.1">
    <property type="nucleotide sequence ID" value="XM_001348577.1"/>
</dbReference>
<dbReference type="PDB" id="3KQX">
    <property type="method" value="X-ray"/>
    <property type="resolution" value="2.01 A"/>
    <property type="chains" value="A/B/C/D/E/F/G/H/I/J/K/L=84-605"/>
</dbReference>
<dbReference type="PDB" id="3KQZ">
    <property type="method" value="X-ray"/>
    <property type="resolution" value="2.39 A"/>
    <property type="chains" value="A/B/C/D/E/F/G/H/I/J/K/L=84-605"/>
</dbReference>
<dbReference type="PDB" id="3KR4">
    <property type="method" value="X-ray"/>
    <property type="resolution" value="2.00 A"/>
    <property type="chains" value="A/B/C/D/E/F/G/H/I/J/K/L=84-605"/>
</dbReference>
<dbReference type="PDB" id="3KR5">
    <property type="method" value="X-ray"/>
    <property type="resolution" value="2.56 A"/>
    <property type="chains" value="A/B/C/D/E/F/G/H/I/J/K/L=84-605"/>
</dbReference>
<dbReference type="PDB" id="3T8W">
    <property type="method" value="X-ray"/>
    <property type="resolution" value="2.00 A"/>
    <property type="chains" value="A/B/C/D/E/F/G/H/I/J/K/L=84-605"/>
</dbReference>
<dbReference type="PDB" id="4K3N">
    <property type="method" value="X-ray"/>
    <property type="resolution" value="2.00 A"/>
    <property type="chains" value="A/B/C/D/E/F/G/H/I/J/K/L=84-605"/>
</dbReference>
<dbReference type="PDB" id="4R6T">
    <property type="method" value="X-ray"/>
    <property type="resolution" value="2.60 A"/>
    <property type="chains" value="A/B/C/D/E/F/G/H/I/J/K/L=84-605"/>
</dbReference>
<dbReference type="PDB" id="4R76">
    <property type="method" value="X-ray"/>
    <property type="resolution" value="2.50 A"/>
    <property type="chains" value="A/B/C/D/E/F/G/H/I/J/K/L=84-605"/>
</dbReference>
<dbReference type="PDB" id="4R7M">
    <property type="method" value="X-ray"/>
    <property type="resolution" value="2.85 A"/>
    <property type="chains" value="A/B/C/D/E/F/G/H/I/J/K/L=84-605"/>
</dbReference>
<dbReference type="PDB" id="4X2T">
    <property type="method" value="X-ray"/>
    <property type="resolution" value="2.73 A"/>
    <property type="chains" value="A/B/C/D/E/F/G/H/I/J/K/L=85-603"/>
</dbReference>
<dbReference type="PDB" id="7RIE">
    <property type="method" value="X-ray"/>
    <property type="resolution" value="2.49 A"/>
    <property type="chains" value="A/B/C/D/E/F/G/H/I/J/K/L=85-605"/>
</dbReference>
<dbReference type="PDB" id="7SRV">
    <property type="method" value="X-ray"/>
    <property type="resolution" value="2.03 A"/>
    <property type="chains" value="A/B/C/D/E/F=85-605"/>
</dbReference>
<dbReference type="PDB" id="7T3V">
    <property type="method" value="X-ray"/>
    <property type="resolution" value="2.30 A"/>
    <property type="chains" value="A/B/C/D/E/F=85-605"/>
</dbReference>
<dbReference type="PDB" id="8EZ4">
    <property type="method" value="X-ray"/>
    <property type="resolution" value="1.89 A"/>
    <property type="chains" value="A/B/C/D/E/F/G/H/I/J/K/L=85-605"/>
</dbReference>
<dbReference type="PDB" id="8SVM">
    <property type="method" value="X-ray"/>
    <property type="resolution" value="2.30 A"/>
    <property type="chains" value="A/B/C/D/E/F/G/H/I/J/K/L=84-605"/>
</dbReference>
<dbReference type="PDB" id="8SW9">
    <property type="method" value="X-ray"/>
    <property type="resolution" value="2.60 A"/>
    <property type="chains" value="A/B/C/D/E/F/G/H/I/J/K/L=84-605"/>
</dbReference>
<dbReference type="PDBsum" id="3KQX"/>
<dbReference type="PDBsum" id="3KQZ"/>
<dbReference type="PDBsum" id="3KR4"/>
<dbReference type="PDBsum" id="3KR5"/>
<dbReference type="PDBsum" id="3T8W"/>
<dbReference type="PDBsum" id="4K3N"/>
<dbReference type="PDBsum" id="4R6T"/>
<dbReference type="PDBsum" id="4R76"/>
<dbReference type="PDBsum" id="4R7M"/>
<dbReference type="PDBsum" id="4X2T"/>
<dbReference type="PDBsum" id="7RIE"/>
<dbReference type="PDBsum" id="7SRV"/>
<dbReference type="PDBsum" id="7T3V"/>
<dbReference type="PDBsum" id="8EZ4"/>
<dbReference type="PDBsum" id="8SVM"/>
<dbReference type="PDBsum" id="8SW9"/>
<dbReference type="SMR" id="Q8IL11"/>
<dbReference type="DIP" id="DIP-58533N"/>
<dbReference type="FunCoup" id="Q8IL11">
    <property type="interactions" value="166"/>
</dbReference>
<dbReference type="STRING" id="36329.Q8IL11"/>
<dbReference type="BindingDB" id="Q8IL11"/>
<dbReference type="ChEMBL" id="CHEMBL1293313"/>
<dbReference type="MEROPS" id="M17.008"/>
<dbReference type="SwissPalm" id="Q8IL11"/>
<dbReference type="PaxDb" id="5833-PF14_0439"/>
<dbReference type="EnsemblProtists" id="CZU00157">
    <property type="protein sequence ID" value="CZU00157"/>
    <property type="gene ID" value="PF3D7_1446200"/>
</dbReference>
<dbReference type="GeneID" id="812021"/>
<dbReference type="KEGG" id="pfa:PF3D7_1446200"/>
<dbReference type="VEuPathDB" id="PlasmoDB:PF3D7_1446200"/>
<dbReference type="HOGENOM" id="CLU_013734_5_1_1"/>
<dbReference type="InParanoid" id="Q8IL11"/>
<dbReference type="OMA" id="LFYEYVT"/>
<dbReference type="OrthoDB" id="412814at2759"/>
<dbReference type="PhylomeDB" id="Q8IL11"/>
<dbReference type="BRENDA" id="3.4.11.1">
    <property type="organism ID" value="4889"/>
</dbReference>
<dbReference type="BRENDA" id="3.4.11.20">
    <property type="organism ID" value="4889"/>
</dbReference>
<dbReference type="EvolutionaryTrace" id="Q8IL11"/>
<dbReference type="Proteomes" id="UP000001450">
    <property type="component" value="Chromosome 14"/>
</dbReference>
<dbReference type="GO" id="GO:0005737">
    <property type="term" value="C:cytoplasm"/>
    <property type="evidence" value="ECO:0000318"/>
    <property type="project" value="GO_Central"/>
</dbReference>
<dbReference type="GO" id="GO:0005829">
    <property type="term" value="C:cytosol"/>
    <property type="evidence" value="ECO:0000314"/>
    <property type="project" value="GeneDB"/>
</dbReference>
<dbReference type="GO" id="GO:0004180">
    <property type="term" value="F:carboxypeptidase activity"/>
    <property type="evidence" value="ECO:0007669"/>
    <property type="project" value="RHEA"/>
</dbReference>
<dbReference type="GO" id="GO:0042802">
    <property type="term" value="F:identical protein binding"/>
    <property type="evidence" value="ECO:0000353"/>
    <property type="project" value="IntAct"/>
</dbReference>
<dbReference type="GO" id="GO:0030145">
    <property type="term" value="F:manganese ion binding"/>
    <property type="evidence" value="ECO:0007669"/>
    <property type="project" value="InterPro"/>
</dbReference>
<dbReference type="GO" id="GO:0046872">
    <property type="term" value="F:metal ion binding"/>
    <property type="evidence" value="ECO:0000314"/>
    <property type="project" value="UniProtKB"/>
</dbReference>
<dbReference type="GO" id="GO:0070006">
    <property type="term" value="F:metalloaminopeptidase activity"/>
    <property type="evidence" value="ECO:0000314"/>
    <property type="project" value="UniProtKB"/>
</dbReference>
<dbReference type="GO" id="GO:0070573">
    <property type="term" value="F:metallodipeptidase activity"/>
    <property type="evidence" value="ECO:0000314"/>
    <property type="project" value="UniProtKB"/>
</dbReference>
<dbReference type="GO" id="GO:0008233">
    <property type="term" value="F:peptidase activity"/>
    <property type="evidence" value="ECO:0000318"/>
    <property type="project" value="GO_Central"/>
</dbReference>
<dbReference type="GO" id="GO:0008270">
    <property type="term" value="F:zinc ion binding"/>
    <property type="evidence" value="ECO:0000314"/>
    <property type="project" value="UniProtKB"/>
</dbReference>
<dbReference type="GO" id="GO:0043171">
    <property type="term" value="P:peptide catabolic process"/>
    <property type="evidence" value="ECO:0000314"/>
    <property type="project" value="UniProtKB"/>
</dbReference>
<dbReference type="GO" id="GO:0006508">
    <property type="term" value="P:proteolysis"/>
    <property type="evidence" value="ECO:0000314"/>
    <property type="project" value="UniProtKB"/>
</dbReference>
<dbReference type="CDD" id="cd00433">
    <property type="entry name" value="Peptidase_M17"/>
    <property type="match status" value="1"/>
</dbReference>
<dbReference type="FunFam" id="3.40.220.10:FF:000014">
    <property type="entry name" value="M17 leucyl aminopeptidase"/>
    <property type="match status" value="1"/>
</dbReference>
<dbReference type="FunFam" id="3.40.630.10:FF:000033">
    <property type="entry name" value="M17 leucyl aminopeptidase"/>
    <property type="match status" value="1"/>
</dbReference>
<dbReference type="Gene3D" id="3.40.220.10">
    <property type="entry name" value="Leucine Aminopeptidase, subunit E, domain 1"/>
    <property type="match status" value="1"/>
</dbReference>
<dbReference type="Gene3D" id="3.40.630.10">
    <property type="entry name" value="Zn peptidases"/>
    <property type="match status" value="1"/>
</dbReference>
<dbReference type="HAMAP" id="MF_00181">
    <property type="entry name" value="Cytosol_peptidase_M17"/>
    <property type="match status" value="1"/>
</dbReference>
<dbReference type="InterPro" id="IPR011356">
    <property type="entry name" value="Leucine_aapep/pepB"/>
</dbReference>
<dbReference type="InterPro" id="IPR043472">
    <property type="entry name" value="Macro_dom-like"/>
</dbReference>
<dbReference type="InterPro" id="IPR000819">
    <property type="entry name" value="Peptidase_M17_C"/>
</dbReference>
<dbReference type="InterPro" id="IPR023042">
    <property type="entry name" value="Peptidase_M17_leu_NH2_pept"/>
</dbReference>
<dbReference type="PANTHER" id="PTHR11963:SF23">
    <property type="entry name" value="CYTOSOL AMINOPEPTIDASE"/>
    <property type="match status" value="1"/>
</dbReference>
<dbReference type="PANTHER" id="PTHR11963">
    <property type="entry name" value="LEUCINE AMINOPEPTIDASE-RELATED"/>
    <property type="match status" value="1"/>
</dbReference>
<dbReference type="Pfam" id="PF00883">
    <property type="entry name" value="Peptidase_M17"/>
    <property type="match status" value="1"/>
</dbReference>
<dbReference type="PRINTS" id="PR00481">
    <property type="entry name" value="LAMNOPPTDASE"/>
</dbReference>
<dbReference type="SUPFAM" id="SSF52949">
    <property type="entry name" value="Macro domain-like"/>
    <property type="match status" value="1"/>
</dbReference>
<dbReference type="SUPFAM" id="SSF53187">
    <property type="entry name" value="Zn-dependent exopeptidases"/>
    <property type="match status" value="1"/>
</dbReference>
<dbReference type="PROSITE" id="PS00631">
    <property type="entry name" value="CYTOSOL_AP"/>
    <property type="match status" value="1"/>
</dbReference>
<organism evidence="25">
    <name type="scientific">Plasmodium falciparum (isolate 3D7)</name>
    <dbReference type="NCBI Taxonomy" id="36329"/>
    <lineage>
        <taxon>Eukaryota</taxon>
        <taxon>Sar</taxon>
        <taxon>Alveolata</taxon>
        <taxon>Apicomplexa</taxon>
        <taxon>Aconoidasida</taxon>
        <taxon>Haemosporida</taxon>
        <taxon>Plasmodiidae</taxon>
        <taxon>Plasmodium</taxon>
        <taxon>Plasmodium (Laverania)</taxon>
    </lineage>
</organism>
<protein>
    <recommendedName>
        <fullName evidence="16">Leucine aminopeptidase</fullName>
        <shortName evidence="15">PfLAP</shortName>
        <ecNumber evidence="2 3 5 6 10 11 12">3.4.11.1</ecNumber>
        <ecNumber evidence="10">3.4.13.-</ecNumber>
    </recommendedName>
    <alternativeName>
        <fullName evidence="15">M17 leucyl aminopeptidase</fullName>
        <shortName evidence="18">PfA-M17</shortName>
        <shortName evidence="17">PfM17LAP</shortName>
    </alternativeName>
</protein>
<reference evidence="25" key="1">
    <citation type="journal article" date="2002" name="Nature">
        <title>Genome sequence of the human malaria parasite Plasmodium falciparum.</title>
        <authorList>
            <person name="Gardner M.J."/>
            <person name="Hall N."/>
            <person name="Fung E."/>
            <person name="White O."/>
            <person name="Berriman M."/>
            <person name="Hyman R.W."/>
            <person name="Carlton J.M."/>
            <person name="Pain A."/>
            <person name="Nelson K.E."/>
            <person name="Bowman S."/>
            <person name="Paulsen I.T."/>
            <person name="James K.D."/>
            <person name="Eisen J.A."/>
            <person name="Rutherford K.M."/>
            <person name="Salzberg S.L."/>
            <person name="Craig A."/>
            <person name="Kyes S."/>
            <person name="Chan M.-S."/>
            <person name="Nene V."/>
            <person name="Shallom S.J."/>
            <person name="Suh B."/>
            <person name="Peterson J."/>
            <person name="Angiuoli S."/>
            <person name="Pertea M."/>
            <person name="Allen J."/>
            <person name="Selengut J."/>
            <person name="Haft D."/>
            <person name="Mather M.W."/>
            <person name="Vaidya A.B."/>
            <person name="Martin D.M.A."/>
            <person name="Fairlamb A.H."/>
            <person name="Fraunholz M.J."/>
            <person name="Roos D.S."/>
            <person name="Ralph S.A."/>
            <person name="McFadden G.I."/>
            <person name="Cummings L.M."/>
            <person name="Subramanian G.M."/>
            <person name="Mungall C."/>
            <person name="Venter J.C."/>
            <person name="Carucci D.J."/>
            <person name="Hoffman S.L."/>
            <person name="Newbold C."/>
            <person name="Davis R.W."/>
            <person name="Fraser C.M."/>
            <person name="Barrell B.G."/>
        </authorList>
    </citation>
    <scope>NUCLEOTIDE SEQUENCE [LARGE SCALE GENOMIC DNA]</scope>
    <source>
        <strain evidence="25">3D7</strain>
    </source>
</reference>
<reference evidence="19" key="2">
    <citation type="journal article" date="2007" name="J. Biol. Chem.">
        <title>Characterization of the Plasmodium falciparum M17 leucyl aminopeptidase. A protease involved in amino acid regulation with potential for antimalarial drug development.</title>
        <authorList>
            <person name="Stack C.M."/>
            <person name="Lowther J."/>
            <person name="Cunningham E."/>
            <person name="Donnelly S."/>
            <person name="Gardiner D.L."/>
            <person name="Trenholme K.R."/>
            <person name="Skinner-Adams T.S."/>
            <person name="Teuscher F."/>
            <person name="Grembecka J."/>
            <person name="Mucha A."/>
            <person name="Kafarski P."/>
            <person name="Lua L."/>
            <person name="Bell A."/>
            <person name="Dalton J.P."/>
        </authorList>
    </citation>
    <scope>FUNCTION</scope>
    <scope>CATALYTIC ACTIVITY</scope>
    <scope>COFACTOR</scope>
    <scope>ACTIVITY REGULATION</scope>
    <scope>BIOPHYSICOCHEMICAL PROPERTIES</scope>
    <scope>SUBUNIT</scope>
    <scope>SUBCELLULAR LOCATION</scope>
    <scope>DEVELOPMENTAL STAGE</scope>
</reference>
<reference evidence="19" key="3">
    <citation type="journal article" date="2009" name="Biochemistry">
        <title>The M17 leucine aminopeptidase of the malaria parasite Plasmodium falciparum: importance of active site metal ions in the binding of substrates and inhibitors.</title>
        <authorList>
            <person name="Maric S."/>
            <person name="Donnelly S.M."/>
            <person name="Robinson M.W."/>
            <person name="Skinner-Adams T."/>
            <person name="Trenholme K.R."/>
            <person name="Gardiner D.L."/>
            <person name="Dalton J.P."/>
            <person name="Stack C.M."/>
            <person name="Lowther J."/>
        </authorList>
    </citation>
    <scope>CATALYTIC ACTIVITY</scope>
    <scope>COFACTOR</scope>
    <scope>ACTIVITY REGULATION</scope>
    <scope>BIOPHYSICOCHEMICAL PROPERTIES</scope>
</reference>
<reference evidence="19" key="4">
    <citation type="journal article" date="2012" name="PLoS ONE">
        <title>Fingerprinting the substrate specificity of M1 and M17 aminopeptidases of human malaria, Plasmodium falciparum.</title>
        <authorList>
            <person name="Poreba M."/>
            <person name="McGowan S."/>
            <person name="Skinner-Adams T.S."/>
            <person name="Trenholme K.R."/>
            <person name="Gardiner D.L."/>
            <person name="Whisstock J.C."/>
            <person name="To J."/>
            <person name="Salvesen G.S."/>
            <person name="Dalton J.P."/>
            <person name="Drag M."/>
        </authorList>
    </citation>
    <scope>FUNCTION</scope>
    <scope>CATALYTIC ACTIVITY</scope>
    <scope>BIOPHYSICOCHEMICAL PROPERTIES</scope>
</reference>
<reference evidence="19" key="5">
    <citation type="journal article" date="2021" name="Biochem. J.">
        <title>Mapping the substrate specificity of the Plasmodium M1 and M17 aminopeptidases.</title>
        <authorList>
            <person name="Malcolm T.R."/>
            <person name="Swiderska K.W."/>
            <person name="Hayes B.K."/>
            <person name="Webb C.T."/>
            <person name="Drag M."/>
            <person name="Drinkwater N."/>
            <person name="McGowan S."/>
        </authorList>
    </citation>
    <scope>FUNCTION</scope>
    <scope>CATALYTIC ACTIVITY</scope>
    <scope>ACTIVITY REGULATION</scope>
    <scope>BIOPHYSICOCHEMICAL PROPERTIES</scope>
</reference>
<reference evidence="19" key="6">
    <citation type="journal article" date="2021" name="J. Biol. Chem.">
        <title>Active site metals mediate an oligomeric equilibrium in Plasmodium M17 aminopeptidases.</title>
        <authorList>
            <person name="Malcolm T.R."/>
            <person name="Belousoff M.J."/>
            <person name="Venugopal H."/>
            <person name="Borg N.A."/>
            <person name="Drinkwater N."/>
            <person name="Atkinson S.C."/>
            <person name="McGowan S."/>
        </authorList>
    </citation>
    <scope>FUNCTION</scope>
    <scope>CATALYTIC ACTIVITY</scope>
    <scope>COFACTOR</scope>
    <scope>ACTIVITY REGULATION</scope>
    <scope>BIOPHYSICOCHEMICAL PROPERTIES</scope>
    <scope>SUBUNIT</scope>
    <scope>MUTAGENESIS OF ASP-379; GLU-461; TRP-525 AND TYR-533</scope>
</reference>
<reference evidence="19" key="7">
    <citation type="journal article" date="2021" name="Sci. Rep.">
        <title>Biochemical and cellular characterisation of the Plasmodium falciparum M1 alanyl aminopeptidase (PfM1AAP) and M17 leucyl aminopeptidase (PfM17LAP).</title>
        <authorList>
            <person name="Mathew R."/>
            <person name="Wunderlich J."/>
            <person name="Thivierge K."/>
            <person name="Cwiklinski K."/>
            <person name="Dumont C."/>
            <person name="Tilley L."/>
            <person name="Rohrbach P."/>
            <person name="Dalton J.P."/>
        </authorList>
    </citation>
    <scope>FUNCTION</scope>
    <scope>CATALYTIC ACTIVITY</scope>
    <scope>BIOPHYSICOCHEMICAL PROPERTIES</scope>
    <scope>SUBCELLULAR LOCATION</scope>
    <scope>DEVELOPMENTAL STAGE</scope>
</reference>
<reference evidence="26 27 28 29" key="8">
    <citation type="journal article" date="2010" name="Proc. Natl. Acad. Sci. U.S.A.">
        <title>Structure of the Plasmodium falciparum M17 aminopeptidase and significance for the design of drugs targeting the neutral exopeptidases.</title>
        <authorList>
            <person name="McGowan S."/>
            <person name="Oellig C.A."/>
            <person name="Birru W.A."/>
            <person name="Caradoc-Davies T.T."/>
            <person name="Stack C.M."/>
            <person name="Lowther J."/>
            <person name="Skinner-Adams T."/>
            <person name="Mucha A."/>
            <person name="Kafarski P."/>
            <person name="Grembecka J."/>
            <person name="Trenholme K.R."/>
            <person name="Buckle A.M."/>
            <person name="Gardiner D.L."/>
            <person name="Dalton J.P."/>
            <person name="Whisstock J.C."/>
        </authorList>
    </citation>
    <scope>X-RAY CRYSTALLOGRAPHY (2.00 ANGSTROMS) OF 84-605 IN COMPLEX WITH ZINC; MANGANESE AND INHIBITORS</scope>
    <scope>COFACTOR</scope>
</reference>
<reference evidence="30" key="9">
    <citation type="journal article" date="2011" name="Proc. Natl. Acad. Sci. U.S.A.">
        <title>Bestatin-based chemical biology strategy reveals distinct roles for malaria M1- and M17-family aminopeptidases.</title>
        <authorList>
            <person name="Harbut M.B."/>
            <person name="Velmourougane G."/>
            <person name="Dalal S."/>
            <person name="Reiss G."/>
            <person name="Whisstock J.C."/>
            <person name="Onder O."/>
            <person name="Brisson D."/>
            <person name="McGowan S."/>
            <person name="Klemba M."/>
            <person name="Greenbaum D.C."/>
        </authorList>
    </citation>
    <scope>X-RAY CRYSTALLOGRAPHY (2.00 ANGSTROMS) OF 84-605 IN COMPLEX WITH ZINC AND INHIBITOR</scope>
    <scope>FUNCTION</scope>
    <scope>CATALYTIC ACTIVITY</scope>
    <scope>COFACTOR</scope>
    <scope>ACTIVITY REGULATION</scope>
</reference>
<reference evidence="31" key="10">
    <citation type="journal article" date="2013" name="J. Med. Chem.">
        <title>Synthesis and structure-activity relationships of phosphonic arginine mimetics as inhibitors of the M1 and M17 aminopeptidases from Plasmodium falciparum.</title>
        <authorList>
            <person name="Kannan Sivaraman K."/>
            <person name="Paiardini A."/>
            <person name="Sienczyk M."/>
            <person name="Ruggeri C."/>
            <person name="Oellig C.A."/>
            <person name="Dalton J.P."/>
            <person name="Scammells P.J."/>
            <person name="Drag M."/>
            <person name="McGowan S."/>
        </authorList>
    </citation>
    <scope>X-RAY CRYSTALLOGRAPHY (2.00 ANGSTROMS) OF 84-605 IN COMPLEX WITH ZINC AND INHIBITOR</scope>
    <scope>CATALYTIC ACTIVITY</scope>
    <scope>COFACTOR</scope>
</reference>
<reference evidence="32 33 34" key="11">
    <citation type="journal article" date="2014" name="J. Med. Chem.">
        <title>Two-pronged attack: dual inhibition of Plasmodium falciparum M1 and M17 metalloaminopeptidases by a novel series of hydroxamic acid-based inhibitors.</title>
        <authorList>
            <person name="Mistry S.N."/>
            <person name="Drinkwater N."/>
            <person name="Ruggeri C."/>
            <person name="Sivaraman K.K."/>
            <person name="Loganathan S."/>
            <person name="Fletcher S."/>
            <person name="Drag M."/>
            <person name="Paiardini A."/>
            <person name="Avery V.M."/>
            <person name="Scammells P.J."/>
            <person name="McGowan S."/>
        </authorList>
    </citation>
    <scope>X-RAY CRYSTALLOGRAPHY (2.50 ANGSTROMS) OF 84-605 IN COMPLEX WITH ZINC AND INHIBITORS</scope>
    <scope>CATALYTIC ACTIVITY</scope>
    <scope>COFACTOR</scope>
</reference>
<reference evidence="35" key="12">
    <citation type="journal article" date="2015" name="Proteins">
        <title>X-ray crystal structures of an orally available aminopeptidase inhibitor, Tosedostat, bound to anti-malarial drug targets PfA-M1 and PfA-M17.</title>
        <authorList>
            <person name="Drinkwater N."/>
            <person name="Bamert R.S."/>
            <person name="Sivaraman K.K."/>
            <person name="Paiardini A."/>
            <person name="McGowan S."/>
        </authorList>
    </citation>
    <scope>X-RAY CRYSTALLOGRAPHY (2.73 ANGSTROMS) OF 85-603 IN COMPLEX WITH ZINC AND INHIBITOR</scope>
    <scope>CATALYTIC ACTIVITY</scope>
    <scope>COFACTOR</scope>
</reference>
<reference evidence="36" key="13">
    <citation type="submission" date="2021-07" db="PDB data bank">
        <title>Structure of M17 with compound.</title>
        <authorList>
            <person name="Edgar R."/>
            <person name="McGowan S."/>
            <person name="Webb C.T."/>
        </authorList>
    </citation>
    <scope>X-RAY CRYSTALLOGRAPHY (2.49 ANGSTROMS) OF 85-605 IN COMPLEX WITH ZINC AND INHIBITOR</scope>
</reference>
<reference evidence="37 38" key="14">
    <citation type="journal article" date="2022" name="J. Biol. Chem.">
        <title>A metal ion-dependent conformational switch modulates activity of the Plasmodium M17 aminopeptidase.</title>
        <authorList>
            <person name="Webb C.T."/>
            <person name="Yang W."/>
            <person name="Riley B.T."/>
            <person name="Hayes B.K."/>
            <person name="Sivaraman K.K."/>
            <person name="Malcolm T.R."/>
            <person name="Harrop S."/>
            <person name="Atkinson S.C."/>
            <person name="Kass I."/>
            <person name="Buckle A.M."/>
            <person name="Drinkwater N."/>
            <person name="McGowan S."/>
        </authorList>
    </citation>
    <scope>X-RAY CRYSTALLOGRAPHY (2.03 ANGSTROMS) OF 85-605 IN COMPLEX WITH ZINC</scope>
    <scope>CATALYTIC ACTIVITY</scope>
    <scope>COFACTOR</scope>
    <scope>ACTIVITY REGULATION</scope>
    <scope>BIOPHYSICOCHEMICAL PROPERTIES</scope>
    <scope>SUBUNIT</scope>
    <scope>DOMAIN</scope>
    <scope>MUTAGENESIS OF LYS-386; ALA-387; 388-ALA--GLY-390; 388-ALA-PRO-389; ASP-394; TRP-525 AND TYR-533</scope>
</reference>
<accession>Q8IL11</accession>
<name>AMPL_PLAF7</name>
<gene>
    <name evidence="15" type="primary">LAP</name>
    <name evidence="22" type="ORF">PF3D7_1446200</name>
</gene>